<sequence length="119" mass="14042">MKDKILKDREEIEKFFIKLLGREIFISEMDIFASRCGCVGIMITVRGLFVDDVEIFKEKILNKLEELAKSYDINADWIFVRVLPGSDDIINIGVREFCNICREEYRFKKPRPDLISLKF</sequence>
<gene>
    <name type="ordered locus">MJ1658</name>
</gene>
<feature type="chain" id="PRO_0000107461" description="Uncharacterized protein MJ1658">
    <location>
        <begin position="1"/>
        <end position="119"/>
    </location>
</feature>
<dbReference type="EMBL" id="L77117">
    <property type="protein sequence ID" value="AAB99685.1"/>
    <property type="molecule type" value="Genomic_DNA"/>
</dbReference>
<dbReference type="PIR" id="H64506">
    <property type="entry name" value="H64506"/>
</dbReference>
<dbReference type="RefSeq" id="WP_010871182.1">
    <property type="nucleotide sequence ID" value="NC_000909.1"/>
</dbReference>
<dbReference type="FunCoup" id="Q59052">
    <property type="interactions" value="2"/>
</dbReference>
<dbReference type="STRING" id="243232.MJ_1658"/>
<dbReference type="PaxDb" id="243232-MJ_1658"/>
<dbReference type="EnsemblBacteria" id="AAB99685">
    <property type="protein sequence ID" value="AAB99685"/>
    <property type="gene ID" value="MJ_1658"/>
</dbReference>
<dbReference type="GeneID" id="1452567"/>
<dbReference type="KEGG" id="mja:MJ_1658"/>
<dbReference type="eggNOG" id="arCOG06554">
    <property type="taxonomic scope" value="Archaea"/>
</dbReference>
<dbReference type="HOGENOM" id="CLU_144581_0_0_2"/>
<dbReference type="InParanoid" id="Q59052"/>
<dbReference type="OrthoDB" id="144733at2157"/>
<dbReference type="Proteomes" id="UP000000805">
    <property type="component" value="Chromosome"/>
</dbReference>
<dbReference type="InterPro" id="IPR020380">
    <property type="entry name" value="Uncharacterised_MJ1658"/>
</dbReference>
<dbReference type="Pfam" id="PF17393">
    <property type="entry name" value="DUF5402"/>
    <property type="match status" value="1"/>
</dbReference>
<name>Y1658_METJA</name>
<keyword id="KW-1185">Reference proteome</keyword>
<reference key="1">
    <citation type="journal article" date="1996" name="Science">
        <title>Complete genome sequence of the methanogenic archaeon, Methanococcus jannaschii.</title>
        <authorList>
            <person name="Bult C.J."/>
            <person name="White O."/>
            <person name="Olsen G.J."/>
            <person name="Zhou L."/>
            <person name="Fleischmann R.D."/>
            <person name="Sutton G.G."/>
            <person name="Blake J.A."/>
            <person name="FitzGerald L.M."/>
            <person name="Clayton R.A."/>
            <person name="Gocayne J.D."/>
            <person name="Kerlavage A.R."/>
            <person name="Dougherty B.A."/>
            <person name="Tomb J.-F."/>
            <person name="Adams M.D."/>
            <person name="Reich C.I."/>
            <person name="Overbeek R."/>
            <person name="Kirkness E.F."/>
            <person name="Weinstock K.G."/>
            <person name="Merrick J.M."/>
            <person name="Glodek A."/>
            <person name="Scott J.L."/>
            <person name="Geoghagen N.S.M."/>
            <person name="Weidman J.F."/>
            <person name="Fuhrmann J.L."/>
            <person name="Nguyen D."/>
            <person name="Utterback T.R."/>
            <person name="Kelley J.M."/>
            <person name="Peterson J.D."/>
            <person name="Sadow P.W."/>
            <person name="Hanna M.C."/>
            <person name="Cotton M.D."/>
            <person name="Roberts K.M."/>
            <person name="Hurst M.A."/>
            <person name="Kaine B.P."/>
            <person name="Borodovsky M."/>
            <person name="Klenk H.-P."/>
            <person name="Fraser C.M."/>
            <person name="Smith H.O."/>
            <person name="Woese C.R."/>
            <person name="Venter J.C."/>
        </authorList>
    </citation>
    <scope>NUCLEOTIDE SEQUENCE [LARGE SCALE GENOMIC DNA]</scope>
    <source>
        <strain>ATCC 43067 / DSM 2661 / JAL-1 / JCM 10045 / NBRC 100440</strain>
    </source>
</reference>
<accession>Q59052</accession>
<organism>
    <name type="scientific">Methanocaldococcus jannaschii (strain ATCC 43067 / DSM 2661 / JAL-1 / JCM 10045 / NBRC 100440)</name>
    <name type="common">Methanococcus jannaschii</name>
    <dbReference type="NCBI Taxonomy" id="243232"/>
    <lineage>
        <taxon>Archaea</taxon>
        <taxon>Methanobacteriati</taxon>
        <taxon>Methanobacteriota</taxon>
        <taxon>Methanomada group</taxon>
        <taxon>Methanococci</taxon>
        <taxon>Methanococcales</taxon>
        <taxon>Methanocaldococcaceae</taxon>
        <taxon>Methanocaldococcus</taxon>
    </lineage>
</organism>
<proteinExistence type="predicted"/>
<protein>
    <recommendedName>
        <fullName>Uncharacterized protein MJ1658</fullName>
    </recommendedName>
</protein>